<reference evidence="5" key="1">
    <citation type="submission" date="2001-01" db="EMBL/GenBank/DDBJ databases">
        <title>Cloning of a Drosophila simulans gamma-aminobutyric acid receptor.</title>
        <authorList>
            <person name="Le Goff G."/>
            <person name="Berge J.-B."/>
            <person name="Amichot M."/>
        </authorList>
    </citation>
    <scope>NUCLEOTIDE SEQUENCE [MRNA]</scope>
</reference>
<evidence type="ECO:0000250" key="1">
    <source>
        <dbReference type="UniProtKB" id="P02708"/>
    </source>
</evidence>
<evidence type="ECO:0000255" key="2"/>
<evidence type="ECO:0000256" key="3">
    <source>
        <dbReference type="SAM" id="MobiDB-lite"/>
    </source>
</evidence>
<evidence type="ECO:0000305" key="4"/>
<evidence type="ECO:0000312" key="5">
    <source>
        <dbReference type="EMBL" id="AAK00512.1"/>
    </source>
</evidence>
<accession>Q9BLY8</accession>
<comment type="function">
    <text evidence="4">GABA, an inhibitory neurotransmitter, mediates neuronal inhibition by binding to the GABA receptor and opening an integral chloride channel.</text>
</comment>
<comment type="subcellular location">
    <subcellularLocation>
        <location>Postsynaptic cell membrane</location>
        <topology>Multi-pass membrane protein</topology>
    </subcellularLocation>
    <subcellularLocation>
        <location>Cell membrane</location>
        <topology>Multi-pass membrane protein</topology>
    </subcellularLocation>
</comment>
<comment type="similarity">
    <text evidence="4">Belongs to the ligand-gated ion channel (TC 1.A.9) family. Gamma-aminobutyric acid receptor (TC 1.A.9.5) subfamily.</text>
</comment>
<gene>
    <name type="primary">Rdl</name>
</gene>
<proteinExistence type="evidence at transcript level"/>
<sequence>MSDSKMDKLARMAPLPRTPLLTIWLAINMALIAQETGHKRIHTVQAATGGGSMLGDVNISAILDSFSVSYDKRVRPNYGGPPVEVGVTMYVLSISSLSEVKMDFTLDFYFRQFWTDPRLAYRKRPGVETLSVGSEFIKNIWVPDTFFVNEKQSYFHIATTSNEFIRVHHSGSITRSIRLTITASCPMNLQYFPMDRQLCHIEIESFGYTMRDIRYKWNEGPNSVGVSSEVSLPQFKVLGHRQRAMEISLTTGNYSRLACEIQFVRSMGYYLIQIYIPSGLIVVISWVSFWLNRNATPARVALGVTTVLTMTTLMSSTNAALPKISYVKSIDVYLGTCFVMVFASLLEYATVGYMAKRIQMRKQRFMAIQKIAEQKKQQLDGANQQQANPNPNANVGGPGGVGVGPGGPGGPGGGVNVGVGMGMGPEHGHGHGHHAHSHGHPHAPKQTVSNRPIGFSNIQQNVGTRGCSIVGPLFQEVRFKVHDPKAHSKGGTLENTVNGGRGGPQSHGPGPGQGGGPPGGGGGGGGGGGPPEGGGDPEAAVPAHLLHPGKVKKDINKLLGITPSDIDKYSRIVFPVCFVCFNLMYWIIYLHVSDVVADDLVLLGEE</sequence>
<organism evidence="5">
    <name type="scientific">Drosophila simulans</name>
    <name type="common">Fruit fly</name>
    <dbReference type="NCBI Taxonomy" id="7240"/>
    <lineage>
        <taxon>Eukaryota</taxon>
        <taxon>Metazoa</taxon>
        <taxon>Ecdysozoa</taxon>
        <taxon>Arthropoda</taxon>
        <taxon>Hexapoda</taxon>
        <taxon>Insecta</taxon>
        <taxon>Pterygota</taxon>
        <taxon>Neoptera</taxon>
        <taxon>Endopterygota</taxon>
        <taxon>Diptera</taxon>
        <taxon>Brachycera</taxon>
        <taxon>Muscomorpha</taxon>
        <taxon>Ephydroidea</taxon>
        <taxon>Drosophilidae</taxon>
        <taxon>Drosophila</taxon>
        <taxon>Sophophora</taxon>
    </lineage>
</organism>
<protein>
    <recommendedName>
        <fullName>Gamma-aminobutyric acid receptor subunit beta</fullName>
    </recommendedName>
    <alternativeName>
        <fullName>GABA(A) receptor</fullName>
    </alternativeName>
    <alternativeName>
        <fullName>Protein cyclodiene resistance</fullName>
    </alternativeName>
</protein>
<name>GBRB_DROSI</name>
<dbReference type="EMBL" id="AY017266">
    <property type="protein sequence ID" value="AAK00512.1"/>
    <property type="molecule type" value="mRNA"/>
</dbReference>
<dbReference type="SMR" id="Q9BLY8"/>
<dbReference type="GlyCosmos" id="Q9BLY8">
    <property type="glycosylation" value="2 sites, No reported glycans"/>
</dbReference>
<dbReference type="OrthoDB" id="8890589at2759"/>
<dbReference type="GO" id="GO:0034707">
    <property type="term" value="C:chloride channel complex"/>
    <property type="evidence" value="ECO:0007669"/>
    <property type="project" value="UniProtKB-KW"/>
</dbReference>
<dbReference type="GO" id="GO:0045211">
    <property type="term" value="C:postsynaptic membrane"/>
    <property type="evidence" value="ECO:0007669"/>
    <property type="project" value="UniProtKB-SubCell"/>
</dbReference>
<dbReference type="GO" id="GO:0005254">
    <property type="term" value="F:chloride channel activity"/>
    <property type="evidence" value="ECO:0007669"/>
    <property type="project" value="UniProtKB-KW"/>
</dbReference>
<dbReference type="GO" id="GO:0005230">
    <property type="term" value="F:extracellular ligand-gated monoatomic ion channel activity"/>
    <property type="evidence" value="ECO:0007669"/>
    <property type="project" value="InterPro"/>
</dbReference>
<dbReference type="GO" id="GO:0004890">
    <property type="term" value="F:GABA-A receptor activity"/>
    <property type="evidence" value="ECO:0007669"/>
    <property type="project" value="InterPro"/>
</dbReference>
<dbReference type="GO" id="GO:0099095">
    <property type="term" value="F:ligand-gated monoatomic anion channel activity"/>
    <property type="evidence" value="ECO:0007669"/>
    <property type="project" value="UniProtKB-ARBA"/>
</dbReference>
<dbReference type="GO" id="GO:0030594">
    <property type="term" value="F:neurotransmitter receptor activity"/>
    <property type="evidence" value="ECO:0000250"/>
    <property type="project" value="UniProtKB"/>
</dbReference>
<dbReference type="GO" id="GO:0006811">
    <property type="term" value="P:monoatomic ion transport"/>
    <property type="evidence" value="ECO:0000250"/>
    <property type="project" value="UniProtKB"/>
</dbReference>
<dbReference type="CDD" id="cd19008">
    <property type="entry name" value="LGIC_ECD_GABAR_RDL-like"/>
    <property type="match status" value="1"/>
</dbReference>
<dbReference type="CDD" id="cd19049">
    <property type="entry name" value="LGIC_TM_anion"/>
    <property type="match status" value="1"/>
</dbReference>
<dbReference type="FunFam" id="2.70.170.10:FF:000021">
    <property type="entry name" value="Gamma-aminobutyric acid receptor isoform 3b"/>
    <property type="match status" value="1"/>
</dbReference>
<dbReference type="FunFam" id="1.20.58.390:FF:000057">
    <property type="entry name" value="Resistance to dieldrin, isoform E"/>
    <property type="match status" value="1"/>
</dbReference>
<dbReference type="FunFam" id="1.20.58.390:FF:000047">
    <property type="entry name" value="Resistance to dieldrin, isoform H"/>
    <property type="match status" value="1"/>
</dbReference>
<dbReference type="Gene3D" id="2.70.170.10">
    <property type="entry name" value="Neurotransmitter-gated ion-channel ligand-binding domain"/>
    <property type="match status" value="1"/>
</dbReference>
<dbReference type="Gene3D" id="1.20.58.390">
    <property type="entry name" value="Neurotransmitter-gated ion-channel transmembrane domain"/>
    <property type="match status" value="2"/>
</dbReference>
<dbReference type="InterPro" id="IPR006028">
    <property type="entry name" value="GABAA/Glycine_rcpt"/>
</dbReference>
<dbReference type="InterPro" id="IPR002289">
    <property type="entry name" value="GABAAb_rcpt"/>
</dbReference>
<dbReference type="InterPro" id="IPR006202">
    <property type="entry name" value="Neur_chan_lig-bd"/>
</dbReference>
<dbReference type="InterPro" id="IPR036734">
    <property type="entry name" value="Neur_chan_lig-bd_sf"/>
</dbReference>
<dbReference type="InterPro" id="IPR006201">
    <property type="entry name" value="Neur_channel"/>
</dbReference>
<dbReference type="InterPro" id="IPR036719">
    <property type="entry name" value="Neuro-gated_channel_TM_sf"/>
</dbReference>
<dbReference type="InterPro" id="IPR038050">
    <property type="entry name" value="Neuro_actylchol_rec"/>
</dbReference>
<dbReference type="InterPro" id="IPR006029">
    <property type="entry name" value="Neurotrans-gated_channel_TM"/>
</dbReference>
<dbReference type="InterPro" id="IPR018000">
    <property type="entry name" value="Neurotransmitter_ion_chnl_CS"/>
</dbReference>
<dbReference type="NCBIfam" id="TIGR00860">
    <property type="entry name" value="LIC"/>
    <property type="match status" value="1"/>
</dbReference>
<dbReference type="PANTHER" id="PTHR18945">
    <property type="entry name" value="NEUROTRANSMITTER GATED ION CHANNEL"/>
    <property type="match status" value="1"/>
</dbReference>
<dbReference type="Pfam" id="PF02931">
    <property type="entry name" value="Neur_chan_LBD"/>
    <property type="match status" value="1"/>
</dbReference>
<dbReference type="Pfam" id="PF02932">
    <property type="entry name" value="Neur_chan_memb"/>
    <property type="match status" value="1"/>
</dbReference>
<dbReference type="PRINTS" id="PR01160">
    <property type="entry name" value="GABAARBETA"/>
</dbReference>
<dbReference type="PRINTS" id="PR00253">
    <property type="entry name" value="GABAARECEPTR"/>
</dbReference>
<dbReference type="PRINTS" id="PR00252">
    <property type="entry name" value="NRIONCHANNEL"/>
</dbReference>
<dbReference type="SUPFAM" id="SSF90112">
    <property type="entry name" value="Neurotransmitter-gated ion-channel transmembrane pore"/>
    <property type="match status" value="1"/>
</dbReference>
<dbReference type="SUPFAM" id="SSF63712">
    <property type="entry name" value="Nicotinic receptor ligand binding domain-like"/>
    <property type="match status" value="1"/>
</dbReference>
<dbReference type="PROSITE" id="PS00236">
    <property type="entry name" value="NEUROTR_ION_CHANNEL"/>
    <property type="match status" value="1"/>
</dbReference>
<feature type="signal peptide" evidence="2">
    <location>
        <begin position="1"/>
        <end position="44"/>
    </location>
</feature>
<feature type="chain" id="PRO_0000000453" description="Gamma-aminobutyric acid receptor subunit beta">
    <location>
        <begin position="45"/>
        <end position="606"/>
    </location>
</feature>
<feature type="topological domain" description="Extracellular" evidence="2">
    <location>
        <begin position="45"/>
        <end position="268"/>
    </location>
</feature>
<feature type="transmembrane region" description="Helical" evidence="2">
    <location>
        <begin position="269"/>
        <end position="291"/>
    </location>
</feature>
<feature type="transmembrane region" description="Helical" evidence="2">
    <location>
        <begin position="297"/>
        <end position="316"/>
    </location>
</feature>
<feature type="transmembrane region" description="Helical" evidence="2">
    <location>
        <begin position="333"/>
        <end position="356"/>
    </location>
</feature>
<feature type="topological domain" description="Cytoplasmic" evidence="2">
    <location>
        <begin position="357"/>
        <end position="568"/>
    </location>
</feature>
<feature type="transmembrane region" description="Helical" evidence="2">
    <location>
        <begin position="569"/>
        <end position="590"/>
    </location>
</feature>
<feature type="region of interest" description="Disordered" evidence="3">
    <location>
        <begin position="376"/>
        <end position="451"/>
    </location>
</feature>
<feature type="region of interest" description="Disordered" evidence="3">
    <location>
        <begin position="482"/>
        <end position="542"/>
    </location>
</feature>
<feature type="compositionally biased region" description="Low complexity" evidence="3">
    <location>
        <begin position="381"/>
        <end position="395"/>
    </location>
</feature>
<feature type="compositionally biased region" description="Gly residues" evidence="3">
    <location>
        <begin position="396"/>
        <end position="425"/>
    </location>
</feature>
<feature type="compositionally biased region" description="Basic residues" evidence="3">
    <location>
        <begin position="430"/>
        <end position="443"/>
    </location>
</feature>
<feature type="compositionally biased region" description="Gly residues" evidence="3">
    <location>
        <begin position="499"/>
        <end position="536"/>
    </location>
</feature>
<feature type="glycosylation site" description="N-linked (GlcNAc...) asparagine" evidence="4">
    <location>
        <position position="58"/>
    </location>
</feature>
<feature type="glycosylation site" description="N-linked (GlcNAc...) asparagine" evidence="4">
    <location>
        <position position="253"/>
    </location>
</feature>
<feature type="disulfide bond" evidence="1">
    <location>
        <begin position="185"/>
        <end position="199"/>
    </location>
</feature>
<keyword id="KW-1003">Cell membrane</keyword>
<keyword id="KW-0868">Chloride</keyword>
<keyword id="KW-0869">Chloride channel</keyword>
<keyword id="KW-1015">Disulfide bond</keyword>
<keyword id="KW-0325">Glycoprotein</keyword>
<keyword id="KW-0407">Ion channel</keyword>
<keyword id="KW-0406">Ion transport</keyword>
<keyword id="KW-1071">Ligand-gated ion channel</keyword>
<keyword id="KW-0472">Membrane</keyword>
<keyword id="KW-0628">Postsynaptic cell membrane</keyword>
<keyword id="KW-0675">Receptor</keyword>
<keyword id="KW-0732">Signal</keyword>
<keyword id="KW-0770">Synapse</keyword>
<keyword id="KW-0812">Transmembrane</keyword>
<keyword id="KW-1133">Transmembrane helix</keyword>
<keyword id="KW-0813">Transport</keyword>